<dbReference type="EMBL" id="AP009152">
    <property type="protein sequence ID" value="BAG28967.1"/>
    <property type="molecule type" value="Genomic_DNA"/>
</dbReference>
<dbReference type="RefSeq" id="WP_012397692.1">
    <property type="nucleotide sequence ID" value="NZ_VECX01000001.1"/>
</dbReference>
<dbReference type="SMR" id="B2GIZ7"/>
<dbReference type="STRING" id="378753.KRH_06200"/>
<dbReference type="KEGG" id="krh:KRH_06200"/>
<dbReference type="eggNOG" id="COG0185">
    <property type="taxonomic scope" value="Bacteria"/>
</dbReference>
<dbReference type="HOGENOM" id="CLU_144911_0_1_11"/>
<dbReference type="OrthoDB" id="9797833at2"/>
<dbReference type="Proteomes" id="UP000008838">
    <property type="component" value="Chromosome"/>
</dbReference>
<dbReference type="GO" id="GO:0005737">
    <property type="term" value="C:cytoplasm"/>
    <property type="evidence" value="ECO:0007669"/>
    <property type="project" value="UniProtKB-ARBA"/>
</dbReference>
<dbReference type="GO" id="GO:0015935">
    <property type="term" value="C:small ribosomal subunit"/>
    <property type="evidence" value="ECO:0007669"/>
    <property type="project" value="InterPro"/>
</dbReference>
<dbReference type="GO" id="GO:0019843">
    <property type="term" value="F:rRNA binding"/>
    <property type="evidence" value="ECO:0007669"/>
    <property type="project" value="UniProtKB-UniRule"/>
</dbReference>
<dbReference type="GO" id="GO:0003735">
    <property type="term" value="F:structural constituent of ribosome"/>
    <property type="evidence" value="ECO:0007669"/>
    <property type="project" value="InterPro"/>
</dbReference>
<dbReference type="GO" id="GO:0000028">
    <property type="term" value="P:ribosomal small subunit assembly"/>
    <property type="evidence" value="ECO:0007669"/>
    <property type="project" value="TreeGrafter"/>
</dbReference>
<dbReference type="GO" id="GO:0006412">
    <property type="term" value="P:translation"/>
    <property type="evidence" value="ECO:0007669"/>
    <property type="project" value="UniProtKB-UniRule"/>
</dbReference>
<dbReference type="FunFam" id="3.30.860.10:FF:000001">
    <property type="entry name" value="30S ribosomal protein S19"/>
    <property type="match status" value="1"/>
</dbReference>
<dbReference type="Gene3D" id="3.30.860.10">
    <property type="entry name" value="30s Ribosomal Protein S19, Chain A"/>
    <property type="match status" value="1"/>
</dbReference>
<dbReference type="HAMAP" id="MF_00531">
    <property type="entry name" value="Ribosomal_uS19"/>
    <property type="match status" value="1"/>
</dbReference>
<dbReference type="InterPro" id="IPR002222">
    <property type="entry name" value="Ribosomal_uS19"/>
</dbReference>
<dbReference type="InterPro" id="IPR005732">
    <property type="entry name" value="Ribosomal_uS19_bac-type"/>
</dbReference>
<dbReference type="InterPro" id="IPR020934">
    <property type="entry name" value="Ribosomal_uS19_CS"/>
</dbReference>
<dbReference type="InterPro" id="IPR023575">
    <property type="entry name" value="Ribosomal_uS19_SF"/>
</dbReference>
<dbReference type="NCBIfam" id="TIGR01050">
    <property type="entry name" value="rpsS_bact"/>
    <property type="match status" value="1"/>
</dbReference>
<dbReference type="PANTHER" id="PTHR11880">
    <property type="entry name" value="RIBOSOMAL PROTEIN S19P FAMILY MEMBER"/>
    <property type="match status" value="1"/>
</dbReference>
<dbReference type="PANTHER" id="PTHR11880:SF8">
    <property type="entry name" value="SMALL RIBOSOMAL SUBUNIT PROTEIN US19M"/>
    <property type="match status" value="1"/>
</dbReference>
<dbReference type="Pfam" id="PF00203">
    <property type="entry name" value="Ribosomal_S19"/>
    <property type="match status" value="1"/>
</dbReference>
<dbReference type="PIRSF" id="PIRSF002144">
    <property type="entry name" value="Ribosomal_S19"/>
    <property type="match status" value="1"/>
</dbReference>
<dbReference type="PRINTS" id="PR00975">
    <property type="entry name" value="RIBOSOMALS19"/>
</dbReference>
<dbReference type="SUPFAM" id="SSF54570">
    <property type="entry name" value="Ribosomal protein S19"/>
    <property type="match status" value="1"/>
</dbReference>
<dbReference type="PROSITE" id="PS00323">
    <property type="entry name" value="RIBOSOMAL_S19"/>
    <property type="match status" value="1"/>
</dbReference>
<gene>
    <name evidence="1" type="primary">rpsS</name>
    <name type="ordered locus">KRH_06200</name>
</gene>
<keyword id="KW-1185">Reference proteome</keyword>
<keyword id="KW-0687">Ribonucleoprotein</keyword>
<keyword id="KW-0689">Ribosomal protein</keyword>
<keyword id="KW-0694">RNA-binding</keyword>
<keyword id="KW-0699">rRNA-binding</keyword>
<comment type="function">
    <text evidence="1">Protein S19 forms a complex with S13 that binds strongly to the 16S ribosomal RNA.</text>
</comment>
<comment type="similarity">
    <text evidence="1">Belongs to the universal ribosomal protein uS19 family.</text>
</comment>
<organism>
    <name type="scientific">Kocuria rhizophila (strain ATCC 9341 / DSM 348 / NBRC 103217 / DC2201)</name>
    <dbReference type="NCBI Taxonomy" id="378753"/>
    <lineage>
        <taxon>Bacteria</taxon>
        <taxon>Bacillati</taxon>
        <taxon>Actinomycetota</taxon>
        <taxon>Actinomycetes</taxon>
        <taxon>Micrococcales</taxon>
        <taxon>Micrococcaceae</taxon>
        <taxon>Kocuria</taxon>
    </lineage>
</organism>
<feature type="chain" id="PRO_1000127991" description="Small ribosomal subunit protein uS19">
    <location>
        <begin position="1"/>
        <end position="93"/>
    </location>
</feature>
<sequence>MPRSLKKGPFVDQHLFVKVAKENEKGTKNVIKTWSRRSMIIPDMLGHTIAVHDGRKHVPVFITESMVGHKLGEFAPTRTFRGHVKDDKKGKRR</sequence>
<name>RS19_KOCRD</name>
<reference key="1">
    <citation type="journal article" date="2008" name="J. Bacteriol.">
        <title>Complete genome sequence of the soil actinomycete Kocuria rhizophila.</title>
        <authorList>
            <person name="Takarada H."/>
            <person name="Sekine M."/>
            <person name="Kosugi H."/>
            <person name="Matsuo Y."/>
            <person name="Fujisawa T."/>
            <person name="Omata S."/>
            <person name="Kishi E."/>
            <person name="Shimizu A."/>
            <person name="Tsukatani N."/>
            <person name="Tanikawa S."/>
            <person name="Fujita N."/>
            <person name="Harayama S."/>
        </authorList>
    </citation>
    <scope>NUCLEOTIDE SEQUENCE [LARGE SCALE GENOMIC DNA]</scope>
    <source>
        <strain>ATCC 9341 / DSM 348 / NBRC 103217 / DC2201</strain>
    </source>
</reference>
<evidence type="ECO:0000255" key="1">
    <source>
        <dbReference type="HAMAP-Rule" id="MF_00531"/>
    </source>
</evidence>
<evidence type="ECO:0000305" key="2"/>
<accession>B2GIZ7</accession>
<proteinExistence type="inferred from homology"/>
<protein>
    <recommendedName>
        <fullName evidence="1">Small ribosomal subunit protein uS19</fullName>
    </recommendedName>
    <alternativeName>
        <fullName evidence="2">30S ribosomal protein S19</fullName>
    </alternativeName>
</protein>